<organism>
    <name type="scientific">Homo sapiens</name>
    <name type="common">Human</name>
    <dbReference type="NCBI Taxonomy" id="9606"/>
    <lineage>
        <taxon>Eukaryota</taxon>
        <taxon>Metazoa</taxon>
        <taxon>Chordata</taxon>
        <taxon>Craniata</taxon>
        <taxon>Vertebrata</taxon>
        <taxon>Euteleostomi</taxon>
        <taxon>Mammalia</taxon>
        <taxon>Eutheria</taxon>
        <taxon>Euarchontoglires</taxon>
        <taxon>Primates</taxon>
        <taxon>Haplorrhini</taxon>
        <taxon>Catarrhini</taxon>
        <taxon>Hominidae</taxon>
        <taxon>Homo</taxon>
    </lineage>
</organism>
<proteinExistence type="evidence at protein level"/>
<evidence type="ECO:0000250" key="1">
    <source>
        <dbReference type="UniProtKB" id="Q9D979"/>
    </source>
</evidence>
<evidence type="ECO:0000256" key="2">
    <source>
        <dbReference type="SAM" id="MobiDB-lite"/>
    </source>
</evidence>
<evidence type="ECO:0000269" key="3">
    <source>
    </source>
</evidence>
<evidence type="ECO:0000269" key="4">
    <source>
    </source>
</evidence>
<evidence type="ECO:0000305" key="5"/>
<evidence type="ECO:0000312" key="6">
    <source>
        <dbReference type="HGNC" id="HGNC:26990"/>
    </source>
</evidence>
<keyword id="KW-0963">Cytoplasm</keyword>
<keyword id="KW-0539">Nucleus</keyword>
<keyword id="KW-1267">Proteomics identification</keyword>
<keyword id="KW-1185">Reference proteome</keyword>
<dbReference type="EMBL" id="AC037475">
    <property type="status" value="NOT_ANNOTATED_CDS"/>
    <property type="molecule type" value="Genomic_DNA"/>
</dbReference>
<dbReference type="EMBL" id="BC036356">
    <property type="protein sequence ID" value="AAH36356.1"/>
    <property type="status" value="ALT_INIT"/>
    <property type="molecule type" value="mRNA"/>
</dbReference>
<dbReference type="EMBL" id="BC048806">
    <property type="protein sequence ID" value="AAH48806.1"/>
    <property type="status" value="ALT_INIT"/>
    <property type="molecule type" value="mRNA"/>
</dbReference>
<dbReference type="CCDS" id="CCDS32698.2"/>
<dbReference type="RefSeq" id="NP_859058.2">
    <property type="nucleotide sequence ID" value="NM_181707.3"/>
</dbReference>
<dbReference type="SMR" id="Q86WR6"/>
<dbReference type="BioGRID" id="125886">
    <property type="interactions" value="4"/>
</dbReference>
<dbReference type="FunCoup" id="Q86WR6">
    <property type="interactions" value="25"/>
</dbReference>
<dbReference type="STRING" id="9606.ENSP00000269127"/>
<dbReference type="iPTMnet" id="Q86WR6"/>
<dbReference type="PhosphoSitePlus" id="Q86WR6"/>
<dbReference type="BioMuta" id="C17orf64"/>
<dbReference type="jPOST" id="Q86WR6"/>
<dbReference type="MassIVE" id="Q86WR6"/>
<dbReference type="PaxDb" id="9606-ENSP00000269127"/>
<dbReference type="PeptideAtlas" id="Q86WR6"/>
<dbReference type="ProteomicsDB" id="70192"/>
<dbReference type="Antibodypedia" id="45592">
    <property type="antibodies" value="83 antibodies from 16 providers"/>
</dbReference>
<dbReference type="DNASU" id="124773"/>
<dbReference type="Ensembl" id="ENST00000269127.5">
    <property type="protein sequence ID" value="ENSP00000269127.4"/>
    <property type="gene ID" value="ENSG00000141371.13"/>
</dbReference>
<dbReference type="GeneID" id="124773"/>
<dbReference type="KEGG" id="hsa:124773"/>
<dbReference type="MANE-Select" id="ENST00000269127.5">
    <property type="protein sequence ID" value="ENSP00000269127.4"/>
    <property type="RefSeq nucleotide sequence ID" value="NM_181707.3"/>
    <property type="RefSeq protein sequence ID" value="NP_859058.2"/>
</dbReference>
<dbReference type="UCSC" id="uc002iyq.4">
    <property type="organism name" value="human"/>
</dbReference>
<dbReference type="AGR" id="HGNC:26990"/>
<dbReference type="CTD" id="124773"/>
<dbReference type="GeneCards" id="CHCT1"/>
<dbReference type="HGNC" id="HGNC:26990">
    <property type="gene designation" value="CHCT1"/>
</dbReference>
<dbReference type="HPA" id="ENSG00000141371">
    <property type="expression patterns" value="Tissue enriched (testis)"/>
</dbReference>
<dbReference type="neXtProt" id="NX_Q86WR6"/>
<dbReference type="OpenTargets" id="ENSG00000141371"/>
<dbReference type="PharmGKB" id="PA142672247"/>
<dbReference type="VEuPathDB" id="HostDB:ENSG00000141371"/>
<dbReference type="eggNOG" id="KOG0384">
    <property type="taxonomic scope" value="Eukaryota"/>
</dbReference>
<dbReference type="GeneTree" id="ENSGT00390000003769"/>
<dbReference type="HOGENOM" id="CLU_095548_0_0_1"/>
<dbReference type="InParanoid" id="Q86WR6"/>
<dbReference type="OMA" id="FLQHCCR"/>
<dbReference type="PAN-GO" id="Q86WR6">
    <property type="GO annotations" value="0 GO annotations based on evolutionary models"/>
</dbReference>
<dbReference type="PhylomeDB" id="Q86WR6"/>
<dbReference type="TreeFam" id="TF335849"/>
<dbReference type="PathwayCommons" id="Q86WR6"/>
<dbReference type="BioGRID-ORCS" id="124773">
    <property type="hits" value="7 hits in 1119 CRISPR screens"/>
</dbReference>
<dbReference type="GenomeRNAi" id="124773"/>
<dbReference type="Pharos" id="Q86WR6">
    <property type="development level" value="Tdark"/>
</dbReference>
<dbReference type="PRO" id="PR:Q86WR6"/>
<dbReference type="Proteomes" id="UP000005640">
    <property type="component" value="Chromosome 17"/>
</dbReference>
<dbReference type="RNAct" id="Q86WR6">
    <property type="molecule type" value="protein"/>
</dbReference>
<dbReference type="Bgee" id="ENSG00000141371">
    <property type="expression patterns" value="Expressed in left testis and 109 other cell types or tissues"/>
</dbReference>
<dbReference type="ExpressionAtlas" id="Q86WR6">
    <property type="expression patterns" value="baseline and differential"/>
</dbReference>
<dbReference type="GO" id="GO:0005737">
    <property type="term" value="C:cytoplasm"/>
    <property type="evidence" value="ECO:0007669"/>
    <property type="project" value="UniProtKB-SubCell"/>
</dbReference>
<dbReference type="GO" id="GO:0005634">
    <property type="term" value="C:nucleus"/>
    <property type="evidence" value="ECO:0000314"/>
    <property type="project" value="UniProtKB"/>
</dbReference>
<dbReference type="InterPro" id="IPR039880">
    <property type="entry name" value="CHCT1-like"/>
</dbReference>
<dbReference type="InterPro" id="IPR025260">
    <property type="entry name" value="CHD1-like_C"/>
</dbReference>
<dbReference type="PANTHER" id="PTHR21765:SF1">
    <property type="entry name" value="CHD1 HELICAL C-TERMINAL DOMAIN CONTAINING PROTEIN 1"/>
    <property type="match status" value="1"/>
</dbReference>
<dbReference type="PANTHER" id="PTHR21765">
    <property type="entry name" value="SIMILAR TO CHROMODOMAIN-HELICASE-DNA-BINDING PROTEIN 1 (CHD-1)"/>
    <property type="match status" value="1"/>
</dbReference>
<dbReference type="Pfam" id="PF13907">
    <property type="entry name" value="CHD1-like_C"/>
    <property type="match status" value="1"/>
</dbReference>
<dbReference type="SMART" id="SM01176">
    <property type="entry name" value="DUF4208"/>
    <property type="match status" value="1"/>
</dbReference>
<protein>
    <recommendedName>
        <fullName evidence="5">CHD1 helical C-terminal domain containing protein 1</fullName>
    </recommendedName>
</protein>
<accession>Q86WR6</accession>
<accession>Q8IY87</accession>
<sequence>MEASDGQGGEGDKPLEQVTNVSCLETSSSASPARDSLMRHAKGLDQDTFKTCKEYLRPLKKFLRKLHLPRDLPQKKKLKYMKQSLVVLGDHINTFLQHYCQAWEIKHWRKMLWRFISLFSELEAKQLRRLYKYTKSSQPAKFLVTFCASDAPERSLLADREDSLPKLCHAWGLHSNISGMKERLSNMQTPGQGSPLPGQPRSQDHVKKDSLRELSQKPKLKRKRIKEAPETPETEP</sequence>
<comment type="function">
    <text evidence="1">May play a role in regulation of apoptosis.</text>
</comment>
<comment type="subcellular location">
    <subcellularLocation>
        <location evidence="1">Cytoplasm</location>
    </subcellularLocation>
    <subcellularLocation>
        <location evidence="4">Nucleus</location>
    </subcellularLocation>
    <text evidence="1">Located in the cytoplasm of spermatogonia and spermatocytes.</text>
</comment>
<comment type="domain">
    <text evidence="3">The CHD1 helical C-terminal domain (CHCT) may bind DNA and nucleosomes.</text>
</comment>
<comment type="sequence caution" evidence="5">
    <conflict type="erroneous initiation">
        <sequence resource="EMBL-CDS" id="AAH36356"/>
    </conflict>
    <text>Extended N-terminus.</text>
</comment>
<comment type="sequence caution" evidence="5">
    <conflict type="erroneous initiation">
        <sequence resource="EMBL-CDS" id="AAH48806"/>
    </conflict>
    <text>Truncated N-terminus.</text>
</comment>
<reference key="1">
    <citation type="journal article" date="2006" name="Nature">
        <title>DNA sequence of human chromosome 17 and analysis of rearrangement in the human lineage.</title>
        <authorList>
            <person name="Zody M.C."/>
            <person name="Garber M."/>
            <person name="Adams D.J."/>
            <person name="Sharpe T."/>
            <person name="Harrow J."/>
            <person name="Lupski J.R."/>
            <person name="Nicholson C."/>
            <person name="Searle S.M."/>
            <person name="Wilming L."/>
            <person name="Young S.K."/>
            <person name="Abouelleil A."/>
            <person name="Allen N.R."/>
            <person name="Bi W."/>
            <person name="Bloom T."/>
            <person name="Borowsky M.L."/>
            <person name="Bugalter B.E."/>
            <person name="Butler J."/>
            <person name="Chang J.L."/>
            <person name="Chen C.-K."/>
            <person name="Cook A."/>
            <person name="Corum B."/>
            <person name="Cuomo C.A."/>
            <person name="de Jong P.J."/>
            <person name="DeCaprio D."/>
            <person name="Dewar K."/>
            <person name="FitzGerald M."/>
            <person name="Gilbert J."/>
            <person name="Gibson R."/>
            <person name="Gnerre S."/>
            <person name="Goldstein S."/>
            <person name="Grafham D.V."/>
            <person name="Grocock R."/>
            <person name="Hafez N."/>
            <person name="Hagopian D.S."/>
            <person name="Hart E."/>
            <person name="Norman C.H."/>
            <person name="Humphray S."/>
            <person name="Jaffe D.B."/>
            <person name="Jones M."/>
            <person name="Kamal M."/>
            <person name="Khodiyar V.K."/>
            <person name="LaButti K."/>
            <person name="Laird G."/>
            <person name="Lehoczky J."/>
            <person name="Liu X."/>
            <person name="Lokyitsang T."/>
            <person name="Loveland J."/>
            <person name="Lui A."/>
            <person name="Macdonald P."/>
            <person name="Major J.E."/>
            <person name="Matthews L."/>
            <person name="Mauceli E."/>
            <person name="McCarroll S.A."/>
            <person name="Mihalev A.H."/>
            <person name="Mudge J."/>
            <person name="Nguyen C."/>
            <person name="Nicol R."/>
            <person name="O'Leary S.B."/>
            <person name="Osoegawa K."/>
            <person name="Schwartz D.C."/>
            <person name="Shaw-Smith C."/>
            <person name="Stankiewicz P."/>
            <person name="Steward C."/>
            <person name="Swarbreck D."/>
            <person name="Venkataraman V."/>
            <person name="Whittaker C.A."/>
            <person name="Yang X."/>
            <person name="Zimmer A.R."/>
            <person name="Bradley A."/>
            <person name="Hubbard T."/>
            <person name="Birren B.W."/>
            <person name="Rogers J."/>
            <person name="Lander E.S."/>
            <person name="Nusbaum C."/>
        </authorList>
    </citation>
    <scope>NUCLEOTIDE SEQUENCE [LARGE SCALE GENOMIC DNA]</scope>
</reference>
<reference key="2">
    <citation type="journal article" date="2004" name="Genome Res.">
        <title>The status, quality, and expansion of the NIH full-length cDNA project: the Mammalian Gene Collection (MGC).</title>
        <authorList>
            <consortium name="The MGC Project Team"/>
        </authorList>
    </citation>
    <scope>NUCLEOTIDE SEQUENCE [LARGE SCALE MRNA]</scope>
    <source>
        <tissue>Brain</tissue>
    </source>
</reference>
<reference key="3">
    <citation type="journal article" date="2016" name="J. Mol. Biol.">
        <title>The Chromatin Remodelling Protein CHD1 Contains a Previously Unrecognised C-Terminal Helical Domain.</title>
        <authorList>
            <person name="Mohanty B."/>
            <person name="Helder S."/>
            <person name="Silva A.P."/>
            <person name="Mackay J.P."/>
            <person name="Ryan D.P."/>
        </authorList>
    </citation>
    <scope>DOMAIN</scope>
    <scope>DNA-BINDING</scope>
</reference>
<reference key="4">
    <citation type="journal article" date="2019" name="J. Proteome Res.">
        <title>Cell Type-Specific Expression of Testis Elevated Genes Based on Transcriptomics and Antibody-Based Proteomics.</title>
        <authorList>
            <person name="Pineau C."/>
            <person name="Hikmet F."/>
            <person name="Zhang C."/>
            <person name="Oksvold P."/>
            <person name="Chen S."/>
            <person name="Fagerberg L."/>
            <person name="Uhlen M."/>
            <person name="Lindskog C."/>
        </authorList>
    </citation>
    <scope>SUBCELLULAR LOCATION</scope>
</reference>
<gene>
    <name evidence="6" type="primary">CHCT1</name>
    <name type="synonym">C17orf64</name>
</gene>
<feature type="chain" id="PRO_0000287174" description="CHD1 helical C-terminal domain containing protein 1">
    <location>
        <begin position="1"/>
        <end position="236"/>
    </location>
</feature>
<feature type="region of interest" description="CHD1 helical C-terminal domain (CHCT)" evidence="3">
    <location>
        <begin position="44"/>
        <end position="145"/>
    </location>
</feature>
<feature type="region of interest" description="Disordered" evidence="2">
    <location>
        <begin position="184"/>
        <end position="236"/>
    </location>
</feature>
<feature type="compositionally biased region" description="Basic and acidic residues" evidence="2">
    <location>
        <begin position="202"/>
        <end position="216"/>
    </location>
</feature>
<name>CHCT1_HUMAN</name>